<evidence type="ECO:0000255" key="1">
    <source>
        <dbReference type="HAMAP-Rule" id="MF_00468"/>
    </source>
</evidence>
<evidence type="ECO:0000256" key="2">
    <source>
        <dbReference type="SAM" id="MobiDB-lite"/>
    </source>
</evidence>
<protein>
    <recommendedName>
        <fullName evidence="1">Sulfate transporter CysZ</fullName>
    </recommendedName>
</protein>
<keyword id="KW-0028">Amino-acid biosynthesis</keyword>
<keyword id="KW-0997">Cell inner membrane</keyword>
<keyword id="KW-1003">Cell membrane</keyword>
<keyword id="KW-0198">Cysteine biosynthesis</keyword>
<keyword id="KW-0472">Membrane</keyword>
<keyword id="KW-1185">Reference proteome</keyword>
<keyword id="KW-0764">Sulfate transport</keyword>
<keyword id="KW-0812">Transmembrane</keyword>
<keyword id="KW-1133">Transmembrane helix</keyword>
<keyword id="KW-0813">Transport</keyword>
<reference key="1">
    <citation type="journal article" date="2004" name="Proc. Natl. Acad. Sci. U.S.A.">
        <title>Genome sequence of the enterobacterial phytopathogen Erwinia carotovora subsp. atroseptica and characterization of virulence factors.</title>
        <authorList>
            <person name="Bell K.S."/>
            <person name="Sebaihia M."/>
            <person name="Pritchard L."/>
            <person name="Holden M.T.G."/>
            <person name="Hyman L.J."/>
            <person name="Holeva M.C."/>
            <person name="Thomson N.R."/>
            <person name="Bentley S.D."/>
            <person name="Churcher L.J.C."/>
            <person name="Mungall K."/>
            <person name="Atkin R."/>
            <person name="Bason N."/>
            <person name="Brooks K."/>
            <person name="Chillingworth T."/>
            <person name="Clark K."/>
            <person name="Doggett J."/>
            <person name="Fraser A."/>
            <person name="Hance Z."/>
            <person name="Hauser H."/>
            <person name="Jagels K."/>
            <person name="Moule S."/>
            <person name="Norbertczak H."/>
            <person name="Ormond D."/>
            <person name="Price C."/>
            <person name="Quail M.A."/>
            <person name="Sanders M."/>
            <person name="Walker D."/>
            <person name="Whitehead S."/>
            <person name="Salmond G.P.C."/>
            <person name="Birch P.R.J."/>
            <person name="Parkhill J."/>
            <person name="Toth I.K."/>
        </authorList>
    </citation>
    <scope>NUCLEOTIDE SEQUENCE [LARGE SCALE GENOMIC DNA]</scope>
    <source>
        <strain>SCRI 1043 / ATCC BAA-672</strain>
    </source>
</reference>
<organism>
    <name type="scientific">Pectobacterium atrosepticum (strain SCRI 1043 / ATCC BAA-672)</name>
    <name type="common">Erwinia carotovora subsp. atroseptica</name>
    <dbReference type="NCBI Taxonomy" id="218491"/>
    <lineage>
        <taxon>Bacteria</taxon>
        <taxon>Pseudomonadati</taxon>
        <taxon>Pseudomonadota</taxon>
        <taxon>Gammaproteobacteria</taxon>
        <taxon>Enterobacterales</taxon>
        <taxon>Pectobacteriaceae</taxon>
        <taxon>Pectobacterium</taxon>
    </lineage>
</organism>
<sequence length="275" mass="31321">MSSEKSSFPEKPPSFEKPSHSNTADHTRSGVHYFFAGWRLISLPGIRRFVILPLLMNIVLMGGAFWWLFTQLNDWIPQIMSHIPSWLQWLSYLIWPLAVLSILLVFSYLFSTIANFIAAPFNGLLAEQLEAKLTGQTLPDSGILSIAKDVPRIMKREVQKLAYYLPRAIVLLLLYFIPGIGQTVAPVLWFLFSAWMLAIQYCDYPFDNHKVGFSTMRQALRRHKVANMQFGALVSLFTLVPFLNLVIMPVAVCGATQLWVDRYRNLSATLPKKSP</sequence>
<gene>
    <name evidence="1" type="primary">cysZ</name>
    <name type="ordered locus">ECA0895</name>
</gene>
<feature type="chain" id="PRO_0000204339" description="Sulfate transporter CysZ">
    <location>
        <begin position="1"/>
        <end position="275"/>
    </location>
</feature>
<feature type="transmembrane region" description="Helical" evidence="1">
    <location>
        <begin position="49"/>
        <end position="69"/>
    </location>
</feature>
<feature type="transmembrane region" description="Helical" evidence="1">
    <location>
        <begin position="93"/>
        <end position="113"/>
    </location>
</feature>
<feature type="transmembrane region" description="Helical" evidence="1">
    <location>
        <begin position="169"/>
        <end position="189"/>
    </location>
</feature>
<feature type="transmembrane region" description="Helical" evidence="1">
    <location>
        <begin position="232"/>
        <end position="252"/>
    </location>
</feature>
<feature type="region of interest" description="Disordered" evidence="2">
    <location>
        <begin position="1"/>
        <end position="24"/>
    </location>
</feature>
<feature type="compositionally biased region" description="Basic and acidic residues" evidence="2">
    <location>
        <begin position="13"/>
        <end position="24"/>
    </location>
</feature>
<accession>Q6D8S7</accession>
<name>CYSZ_PECAS</name>
<dbReference type="EMBL" id="BX950851">
    <property type="protein sequence ID" value="CAG73807.1"/>
    <property type="molecule type" value="Genomic_DNA"/>
</dbReference>
<dbReference type="SMR" id="Q6D8S7"/>
<dbReference type="STRING" id="218491.ECA0895"/>
<dbReference type="DNASU" id="2882625"/>
<dbReference type="KEGG" id="eca:ECA0895"/>
<dbReference type="eggNOG" id="COG2981">
    <property type="taxonomic scope" value="Bacteria"/>
</dbReference>
<dbReference type="HOGENOM" id="CLU_070331_1_0_6"/>
<dbReference type="Proteomes" id="UP000007966">
    <property type="component" value="Chromosome"/>
</dbReference>
<dbReference type="GO" id="GO:0005886">
    <property type="term" value="C:plasma membrane"/>
    <property type="evidence" value="ECO:0007669"/>
    <property type="project" value="UniProtKB-SubCell"/>
</dbReference>
<dbReference type="GO" id="GO:0009675">
    <property type="term" value="F:high-affinity sulfate:proton symporter activity"/>
    <property type="evidence" value="ECO:0007669"/>
    <property type="project" value="TreeGrafter"/>
</dbReference>
<dbReference type="GO" id="GO:0019344">
    <property type="term" value="P:cysteine biosynthetic process"/>
    <property type="evidence" value="ECO:0007669"/>
    <property type="project" value="UniProtKB-UniRule"/>
</dbReference>
<dbReference type="GO" id="GO:0000103">
    <property type="term" value="P:sulfate assimilation"/>
    <property type="evidence" value="ECO:0007669"/>
    <property type="project" value="InterPro"/>
</dbReference>
<dbReference type="HAMAP" id="MF_00468">
    <property type="entry name" value="CysZ"/>
    <property type="match status" value="1"/>
</dbReference>
<dbReference type="InterPro" id="IPR050480">
    <property type="entry name" value="CysZ_sulfate_transptr"/>
</dbReference>
<dbReference type="InterPro" id="IPR022985">
    <property type="entry name" value="Sulfate_CysZ"/>
</dbReference>
<dbReference type="NCBIfam" id="NF003433">
    <property type="entry name" value="PRK04949.1"/>
    <property type="match status" value="1"/>
</dbReference>
<dbReference type="PANTHER" id="PTHR37468">
    <property type="entry name" value="SULFATE TRANSPORTER CYSZ"/>
    <property type="match status" value="1"/>
</dbReference>
<dbReference type="PANTHER" id="PTHR37468:SF1">
    <property type="entry name" value="SULFATE TRANSPORTER CYSZ"/>
    <property type="match status" value="1"/>
</dbReference>
<dbReference type="Pfam" id="PF07264">
    <property type="entry name" value="EI24"/>
    <property type="match status" value="1"/>
</dbReference>
<proteinExistence type="inferred from homology"/>
<comment type="function">
    <text evidence="1">High affinity, high specificity proton-dependent sulfate transporter, which mediates sulfate uptake. Provides the sulfur source for the cysteine synthesis pathway.</text>
</comment>
<comment type="subcellular location">
    <subcellularLocation>
        <location evidence="1">Cell inner membrane</location>
        <topology evidence="1">Multi-pass membrane protein</topology>
    </subcellularLocation>
</comment>
<comment type="similarity">
    <text evidence="1">Belongs to the CysZ family.</text>
</comment>